<organism>
    <name type="scientific">Salmonella arizonae (strain ATCC BAA-731 / CDC346-86 / RSK2980)</name>
    <dbReference type="NCBI Taxonomy" id="41514"/>
    <lineage>
        <taxon>Bacteria</taxon>
        <taxon>Pseudomonadati</taxon>
        <taxon>Pseudomonadota</taxon>
        <taxon>Gammaproteobacteria</taxon>
        <taxon>Enterobacterales</taxon>
        <taxon>Enterobacteriaceae</taxon>
        <taxon>Salmonella</taxon>
    </lineage>
</organism>
<accession>A9MHF4</accession>
<keyword id="KW-1185">Reference proteome</keyword>
<keyword id="KW-0687">Ribonucleoprotein</keyword>
<keyword id="KW-0689">Ribosomal protein</keyword>
<keyword id="KW-0694">RNA-binding</keyword>
<keyword id="KW-0699">rRNA-binding</keyword>
<feature type="chain" id="PRO_1000079558" description="Large ribosomal subunit protein uL10">
    <location>
        <begin position="1"/>
        <end position="165"/>
    </location>
</feature>
<comment type="function">
    <text evidence="1">Forms part of the ribosomal stalk, playing a central role in the interaction of the ribosome with GTP-bound translation factors.</text>
</comment>
<comment type="subunit">
    <text evidence="1">Part of the ribosomal stalk of the 50S ribosomal subunit. The N-terminus interacts with L11 and the large rRNA to form the base of the stalk. The C-terminus forms an elongated spine to which L12 dimers bind in a sequential fashion forming a multimeric L10(L12)X complex.</text>
</comment>
<comment type="similarity">
    <text evidence="1">Belongs to the universal ribosomal protein uL10 family.</text>
</comment>
<protein>
    <recommendedName>
        <fullName evidence="1">Large ribosomal subunit protein uL10</fullName>
    </recommendedName>
    <alternativeName>
        <fullName evidence="2">50S ribosomal protein L10</fullName>
    </alternativeName>
</protein>
<gene>
    <name evidence="1" type="primary">rplJ</name>
    <name type="ordered locus">SARI_03512</name>
</gene>
<name>RL10_SALAR</name>
<reference key="1">
    <citation type="submission" date="2007-11" db="EMBL/GenBank/DDBJ databases">
        <authorList>
            <consortium name="The Salmonella enterica serovar Arizonae Genome Sequencing Project"/>
            <person name="McClelland M."/>
            <person name="Sanderson E.K."/>
            <person name="Porwollik S."/>
            <person name="Spieth J."/>
            <person name="Clifton W.S."/>
            <person name="Fulton R."/>
            <person name="Chunyan W."/>
            <person name="Wollam A."/>
            <person name="Shah N."/>
            <person name="Pepin K."/>
            <person name="Bhonagiri V."/>
            <person name="Nash W."/>
            <person name="Johnson M."/>
            <person name="Thiruvilangam P."/>
            <person name="Wilson R."/>
        </authorList>
    </citation>
    <scope>NUCLEOTIDE SEQUENCE [LARGE SCALE GENOMIC DNA]</scope>
    <source>
        <strain>ATCC BAA-731 / CDC346-86 / RSK2980</strain>
    </source>
</reference>
<dbReference type="EMBL" id="CP000880">
    <property type="protein sequence ID" value="ABX23337.1"/>
    <property type="molecule type" value="Genomic_DNA"/>
</dbReference>
<dbReference type="STRING" id="41514.SARI_03512"/>
<dbReference type="KEGG" id="ses:SARI_03512"/>
<dbReference type="HOGENOM" id="CLU_092227_0_2_6"/>
<dbReference type="Proteomes" id="UP000002084">
    <property type="component" value="Chromosome"/>
</dbReference>
<dbReference type="GO" id="GO:0015934">
    <property type="term" value="C:large ribosomal subunit"/>
    <property type="evidence" value="ECO:0007669"/>
    <property type="project" value="InterPro"/>
</dbReference>
<dbReference type="GO" id="GO:0070180">
    <property type="term" value="F:large ribosomal subunit rRNA binding"/>
    <property type="evidence" value="ECO:0007669"/>
    <property type="project" value="UniProtKB-UniRule"/>
</dbReference>
<dbReference type="GO" id="GO:0003735">
    <property type="term" value="F:structural constituent of ribosome"/>
    <property type="evidence" value="ECO:0007669"/>
    <property type="project" value="InterPro"/>
</dbReference>
<dbReference type="GO" id="GO:0006412">
    <property type="term" value="P:translation"/>
    <property type="evidence" value="ECO:0007669"/>
    <property type="project" value="UniProtKB-UniRule"/>
</dbReference>
<dbReference type="CDD" id="cd05797">
    <property type="entry name" value="Ribosomal_L10"/>
    <property type="match status" value="1"/>
</dbReference>
<dbReference type="FunFam" id="3.30.70.1730:FF:000001">
    <property type="entry name" value="50S ribosomal protein L10"/>
    <property type="match status" value="1"/>
</dbReference>
<dbReference type="Gene3D" id="3.30.70.1730">
    <property type="match status" value="1"/>
</dbReference>
<dbReference type="Gene3D" id="6.10.250.2350">
    <property type="match status" value="1"/>
</dbReference>
<dbReference type="HAMAP" id="MF_00362">
    <property type="entry name" value="Ribosomal_uL10"/>
    <property type="match status" value="1"/>
</dbReference>
<dbReference type="InterPro" id="IPR001790">
    <property type="entry name" value="Ribosomal_uL10"/>
</dbReference>
<dbReference type="InterPro" id="IPR043141">
    <property type="entry name" value="Ribosomal_uL10-like_sf"/>
</dbReference>
<dbReference type="InterPro" id="IPR022973">
    <property type="entry name" value="Ribosomal_uL10_bac"/>
</dbReference>
<dbReference type="InterPro" id="IPR047865">
    <property type="entry name" value="Ribosomal_uL10_bac_type"/>
</dbReference>
<dbReference type="InterPro" id="IPR002363">
    <property type="entry name" value="Ribosomal_uL10_CS_bac"/>
</dbReference>
<dbReference type="NCBIfam" id="NF000955">
    <property type="entry name" value="PRK00099.1-1"/>
    <property type="match status" value="1"/>
</dbReference>
<dbReference type="PANTHER" id="PTHR11560">
    <property type="entry name" value="39S RIBOSOMAL PROTEIN L10, MITOCHONDRIAL"/>
    <property type="match status" value="1"/>
</dbReference>
<dbReference type="Pfam" id="PF00466">
    <property type="entry name" value="Ribosomal_L10"/>
    <property type="match status" value="1"/>
</dbReference>
<dbReference type="SUPFAM" id="SSF160369">
    <property type="entry name" value="Ribosomal protein L10-like"/>
    <property type="match status" value="1"/>
</dbReference>
<dbReference type="PROSITE" id="PS01109">
    <property type="entry name" value="RIBOSOMAL_L10"/>
    <property type="match status" value="1"/>
</dbReference>
<sequence>MALNLQDKQAIVAEVSEVAKGALSAVVADSRGVTVDKMTELRKAGREAGVYMRVVRNTLLRRVVEGTQFECLKDTFVGPTLIAYSMEHPGAAARLFKEFAKANAKFEVKAAAFEGELIPASQIDRLATLPTYEEAIARLMATMKEASAGKLVRTLAAVRDAKEAA</sequence>
<evidence type="ECO:0000255" key="1">
    <source>
        <dbReference type="HAMAP-Rule" id="MF_00362"/>
    </source>
</evidence>
<evidence type="ECO:0000305" key="2"/>
<proteinExistence type="inferred from homology"/>